<organism>
    <name type="scientific">Moorella thermoacetica (strain ATCC 39073 / JCM 9320)</name>
    <dbReference type="NCBI Taxonomy" id="264732"/>
    <lineage>
        <taxon>Bacteria</taxon>
        <taxon>Bacillati</taxon>
        <taxon>Bacillota</taxon>
        <taxon>Clostridia</taxon>
        <taxon>Moorellales</taxon>
        <taxon>Moorellaceae</taxon>
        <taxon>Moorella</taxon>
    </lineage>
</organism>
<proteinExistence type="inferred from homology"/>
<protein>
    <recommendedName>
        <fullName evidence="1">Glycogen synthase</fullName>
        <ecNumber evidence="1">2.4.1.21</ecNumber>
    </recommendedName>
    <alternativeName>
        <fullName evidence="1">Starch [bacterial glycogen] synthase</fullName>
    </alternativeName>
</protein>
<keyword id="KW-0320">Glycogen biosynthesis</keyword>
<keyword id="KW-0328">Glycosyltransferase</keyword>
<keyword id="KW-0808">Transferase</keyword>
<gene>
    <name evidence="1" type="primary">glgA</name>
    <name type="ordered locus">Moth_1936</name>
</gene>
<dbReference type="EC" id="2.4.1.21" evidence="1"/>
<dbReference type="EMBL" id="CP000232">
    <property type="protein sequence ID" value="ABC20234.1"/>
    <property type="molecule type" value="Genomic_DNA"/>
</dbReference>
<dbReference type="RefSeq" id="YP_430777.1">
    <property type="nucleotide sequence ID" value="NC_007644.1"/>
</dbReference>
<dbReference type="SMR" id="Q2RH55"/>
<dbReference type="STRING" id="264732.Moth_1936"/>
<dbReference type="CAZy" id="GT5">
    <property type="family name" value="Glycosyltransferase Family 5"/>
</dbReference>
<dbReference type="EnsemblBacteria" id="ABC20234">
    <property type="protein sequence ID" value="ABC20234"/>
    <property type="gene ID" value="Moth_1936"/>
</dbReference>
<dbReference type="KEGG" id="mta:Moth_1936"/>
<dbReference type="PATRIC" id="fig|264732.11.peg.2099"/>
<dbReference type="eggNOG" id="COG0297">
    <property type="taxonomic scope" value="Bacteria"/>
</dbReference>
<dbReference type="HOGENOM" id="CLU_009583_18_2_9"/>
<dbReference type="OrthoDB" id="9808590at2"/>
<dbReference type="UniPathway" id="UPA00164"/>
<dbReference type="GO" id="GO:0009011">
    <property type="term" value="F:alpha-1,4-glucan glucosyltransferase (ADP-glucose donor) activity"/>
    <property type="evidence" value="ECO:0007669"/>
    <property type="project" value="UniProtKB-UniRule"/>
</dbReference>
<dbReference type="GO" id="GO:0004373">
    <property type="term" value="F:alpha-1,4-glucan glucosyltransferase (UDP-glucose donor) activity"/>
    <property type="evidence" value="ECO:0007669"/>
    <property type="project" value="InterPro"/>
</dbReference>
<dbReference type="GO" id="GO:0005978">
    <property type="term" value="P:glycogen biosynthetic process"/>
    <property type="evidence" value="ECO:0007669"/>
    <property type="project" value="UniProtKB-UniRule"/>
</dbReference>
<dbReference type="CDD" id="cd03791">
    <property type="entry name" value="GT5_Glycogen_synthase_DULL1-like"/>
    <property type="match status" value="1"/>
</dbReference>
<dbReference type="Gene3D" id="3.40.50.2000">
    <property type="entry name" value="Glycogen Phosphorylase B"/>
    <property type="match status" value="2"/>
</dbReference>
<dbReference type="HAMAP" id="MF_00484">
    <property type="entry name" value="Glycogen_synth"/>
    <property type="match status" value="1"/>
</dbReference>
<dbReference type="InterPro" id="IPR001296">
    <property type="entry name" value="Glyco_trans_1"/>
</dbReference>
<dbReference type="InterPro" id="IPR011835">
    <property type="entry name" value="GS/SS"/>
</dbReference>
<dbReference type="InterPro" id="IPR013534">
    <property type="entry name" value="Starch_synth_cat_dom"/>
</dbReference>
<dbReference type="NCBIfam" id="TIGR02095">
    <property type="entry name" value="glgA"/>
    <property type="match status" value="1"/>
</dbReference>
<dbReference type="NCBIfam" id="NF001899">
    <property type="entry name" value="PRK00654.1-2"/>
    <property type="match status" value="1"/>
</dbReference>
<dbReference type="PANTHER" id="PTHR45825:SF11">
    <property type="entry name" value="ALPHA AMYLASE DOMAIN-CONTAINING PROTEIN"/>
    <property type="match status" value="1"/>
</dbReference>
<dbReference type="PANTHER" id="PTHR45825">
    <property type="entry name" value="GRANULE-BOUND STARCH SYNTHASE 1, CHLOROPLASTIC/AMYLOPLASTIC"/>
    <property type="match status" value="1"/>
</dbReference>
<dbReference type="Pfam" id="PF08323">
    <property type="entry name" value="Glyco_transf_5"/>
    <property type="match status" value="1"/>
</dbReference>
<dbReference type="Pfam" id="PF00534">
    <property type="entry name" value="Glycos_transf_1"/>
    <property type="match status" value="1"/>
</dbReference>
<dbReference type="SUPFAM" id="SSF53756">
    <property type="entry name" value="UDP-Glycosyltransferase/glycogen phosphorylase"/>
    <property type="match status" value="1"/>
</dbReference>
<name>GLGA_MOOTA</name>
<sequence length="487" mass="55385">MNKPLKILLVSPEVAPLAKTGGLADVAGSLPKALAAKGHEVRVAMPRYRQVKEVNYLTDLPVEMDGSLETAVIRQGKLPGEAGIPVYLIDNYKFFYRDGMYGYGDDAARFNFFCKAVLSMLPWLEFQPDIIHCNDWQTGPIPLFLKVKHEDNPFYRETATIYTIHNLQYQGTFPRNILKTMALSEEFFVPERLEFYGQVSYMKAGILYADLVNTVSKKYALEIQTPEYGERLDGLLRKRAADLRGILNGIDYEEFDPATDRRLAVNYDADHLEKKGENKAALQREMELPVRDVPVLGLISRLVSQKGLDLLAAILDPLMQQDLQFVLLGSGEDYYQQLFSRYKVKYRDKMAVKIGFDPVLAQHIYAGCDIFLMPSRFEPCGLGQMISLRYGAVPVVRATGGLEDTIKDLHQYPGVGNGFTFRDYQPQALLDTINRALHVYRHEPGEWRKLMRRGMAADFSWSASAGHYEEMYREALEKRRAAMFKVG</sequence>
<accession>Q2RH55</accession>
<feature type="chain" id="PRO_0000230247" description="Glycogen synthase">
    <location>
        <begin position="1"/>
        <end position="487"/>
    </location>
</feature>
<feature type="binding site" evidence="1">
    <location>
        <position position="19"/>
    </location>
    <ligand>
        <name>ADP-alpha-D-glucose</name>
        <dbReference type="ChEBI" id="CHEBI:57498"/>
    </ligand>
</feature>
<comment type="function">
    <text evidence="1">Synthesizes alpha-1,4-glucan chains using ADP-glucose.</text>
</comment>
<comment type="catalytic activity">
    <reaction evidence="1">
        <text>[(1-&gt;4)-alpha-D-glucosyl](n) + ADP-alpha-D-glucose = [(1-&gt;4)-alpha-D-glucosyl](n+1) + ADP + H(+)</text>
        <dbReference type="Rhea" id="RHEA:18189"/>
        <dbReference type="Rhea" id="RHEA-COMP:9584"/>
        <dbReference type="Rhea" id="RHEA-COMP:9587"/>
        <dbReference type="ChEBI" id="CHEBI:15378"/>
        <dbReference type="ChEBI" id="CHEBI:15444"/>
        <dbReference type="ChEBI" id="CHEBI:57498"/>
        <dbReference type="ChEBI" id="CHEBI:456216"/>
        <dbReference type="EC" id="2.4.1.21"/>
    </reaction>
</comment>
<comment type="pathway">
    <text evidence="1">Glycan biosynthesis; glycogen biosynthesis.</text>
</comment>
<comment type="similarity">
    <text evidence="1">Belongs to the glycosyltransferase 1 family. Bacterial/plant glycogen synthase subfamily.</text>
</comment>
<evidence type="ECO:0000255" key="1">
    <source>
        <dbReference type="HAMAP-Rule" id="MF_00484"/>
    </source>
</evidence>
<reference key="1">
    <citation type="journal article" date="2008" name="Environ. Microbiol.">
        <title>The complete genome sequence of Moorella thermoacetica (f. Clostridium thermoaceticum).</title>
        <authorList>
            <person name="Pierce E."/>
            <person name="Xie G."/>
            <person name="Barabote R.D."/>
            <person name="Saunders E."/>
            <person name="Han C.S."/>
            <person name="Detter J.C."/>
            <person name="Richardson P."/>
            <person name="Brettin T.S."/>
            <person name="Das A."/>
            <person name="Ljungdahl L.G."/>
            <person name="Ragsdale S.W."/>
        </authorList>
    </citation>
    <scope>NUCLEOTIDE SEQUENCE [LARGE SCALE GENOMIC DNA]</scope>
    <source>
        <strain>ATCC 39073 / JCM 9320</strain>
    </source>
</reference>